<name>PSTB_STAS1</name>
<evidence type="ECO:0000255" key="1">
    <source>
        <dbReference type="HAMAP-Rule" id="MF_01702"/>
    </source>
</evidence>
<evidence type="ECO:0000256" key="2">
    <source>
        <dbReference type="SAM" id="MobiDB-lite"/>
    </source>
</evidence>
<organism>
    <name type="scientific">Staphylococcus saprophyticus subsp. saprophyticus (strain ATCC 15305 / DSM 20229 / NCIMB 8711 / NCTC 7292 / S-41)</name>
    <dbReference type="NCBI Taxonomy" id="342451"/>
    <lineage>
        <taxon>Bacteria</taxon>
        <taxon>Bacillati</taxon>
        <taxon>Bacillota</taxon>
        <taxon>Bacilli</taxon>
        <taxon>Bacillales</taxon>
        <taxon>Staphylococcaceae</taxon>
        <taxon>Staphylococcus</taxon>
    </lineage>
</organism>
<keyword id="KW-0067">ATP-binding</keyword>
<keyword id="KW-1003">Cell membrane</keyword>
<keyword id="KW-0472">Membrane</keyword>
<keyword id="KW-0547">Nucleotide-binding</keyword>
<keyword id="KW-0592">Phosphate transport</keyword>
<keyword id="KW-1185">Reference proteome</keyword>
<keyword id="KW-1278">Translocase</keyword>
<keyword id="KW-0813">Transport</keyword>
<dbReference type="EC" id="7.3.2.1" evidence="1"/>
<dbReference type="EMBL" id="AP008934">
    <property type="protein sequence ID" value="BAE18509.1"/>
    <property type="molecule type" value="Genomic_DNA"/>
</dbReference>
<dbReference type="RefSeq" id="WP_011303141.1">
    <property type="nucleotide sequence ID" value="NZ_MTGA01000038.1"/>
</dbReference>
<dbReference type="SMR" id="Q49XI8"/>
<dbReference type="GeneID" id="66867590"/>
<dbReference type="KEGG" id="ssp:SSP1364"/>
<dbReference type="eggNOG" id="COG1117">
    <property type="taxonomic scope" value="Bacteria"/>
</dbReference>
<dbReference type="HOGENOM" id="CLU_000604_1_22_9"/>
<dbReference type="OrthoDB" id="9802185at2"/>
<dbReference type="Proteomes" id="UP000006371">
    <property type="component" value="Chromosome"/>
</dbReference>
<dbReference type="GO" id="GO:0005886">
    <property type="term" value="C:plasma membrane"/>
    <property type="evidence" value="ECO:0007669"/>
    <property type="project" value="UniProtKB-SubCell"/>
</dbReference>
<dbReference type="GO" id="GO:0005524">
    <property type="term" value="F:ATP binding"/>
    <property type="evidence" value="ECO:0007669"/>
    <property type="project" value="UniProtKB-KW"/>
</dbReference>
<dbReference type="GO" id="GO:0016887">
    <property type="term" value="F:ATP hydrolysis activity"/>
    <property type="evidence" value="ECO:0007669"/>
    <property type="project" value="InterPro"/>
</dbReference>
<dbReference type="GO" id="GO:0015415">
    <property type="term" value="F:ATPase-coupled phosphate ion transmembrane transporter activity"/>
    <property type="evidence" value="ECO:0007669"/>
    <property type="project" value="UniProtKB-EC"/>
</dbReference>
<dbReference type="GO" id="GO:0035435">
    <property type="term" value="P:phosphate ion transmembrane transport"/>
    <property type="evidence" value="ECO:0007669"/>
    <property type="project" value="InterPro"/>
</dbReference>
<dbReference type="CDD" id="cd03260">
    <property type="entry name" value="ABC_PstB_phosphate_transporter"/>
    <property type="match status" value="1"/>
</dbReference>
<dbReference type="Gene3D" id="3.40.50.300">
    <property type="entry name" value="P-loop containing nucleotide triphosphate hydrolases"/>
    <property type="match status" value="1"/>
</dbReference>
<dbReference type="InterPro" id="IPR003593">
    <property type="entry name" value="AAA+_ATPase"/>
</dbReference>
<dbReference type="InterPro" id="IPR003439">
    <property type="entry name" value="ABC_transporter-like_ATP-bd"/>
</dbReference>
<dbReference type="InterPro" id="IPR017871">
    <property type="entry name" value="ABC_transporter-like_CS"/>
</dbReference>
<dbReference type="InterPro" id="IPR027417">
    <property type="entry name" value="P-loop_NTPase"/>
</dbReference>
<dbReference type="InterPro" id="IPR005670">
    <property type="entry name" value="PstB-like"/>
</dbReference>
<dbReference type="NCBIfam" id="TIGR00972">
    <property type="entry name" value="3a0107s01c2"/>
    <property type="match status" value="1"/>
</dbReference>
<dbReference type="PANTHER" id="PTHR43423">
    <property type="entry name" value="ABC TRANSPORTER I FAMILY MEMBER 17"/>
    <property type="match status" value="1"/>
</dbReference>
<dbReference type="PANTHER" id="PTHR43423:SF1">
    <property type="entry name" value="ABC TRANSPORTER I FAMILY MEMBER 17"/>
    <property type="match status" value="1"/>
</dbReference>
<dbReference type="Pfam" id="PF00005">
    <property type="entry name" value="ABC_tran"/>
    <property type="match status" value="1"/>
</dbReference>
<dbReference type="SMART" id="SM00382">
    <property type="entry name" value="AAA"/>
    <property type="match status" value="1"/>
</dbReference>
<dbReference type="SUPFAM" id="SSF52540">
    <property type="entry name" value="P-loop containing nucleoside triphosphate hydrolases"/>
    <property type="match status" value="1"/>
</dbReference>
<dbReference type="PROSITE" id="PS00211">
    <property type="entry name" value="ABC_TRANSPORTER_1"/>
    <property type="match status" value="1"/>
</dbReference>
<dbReference type="PROSITE" id="PS50893">
    <property type="entry name" value="ABC_TRANSPORTER_2"/>
    <property type="match status" value="1"/>
</dbReference>
<dbReference type="PROSITE" id="PS51238">
    <property type="entry name" value="PSTB"/>
    <property type="match status" value="1"/>
</dbReference>
<proteinExistence type="inferred from homology"/>
<gene>
    <name evidence="1" type="primary">pstB</name>
    <name type="ordered locus">SSP1364</name>
</gene>
<accession>Q49XI8</accession>
<reference key="1">
    <citation type="journal article" date="2005" name="Proc. Natl. Acad. Sci. U.S.A.">
        <title>Whole genome sequence of Staphylococcus saprophyticus reveals the pathogenesis of uncomplicated urinary tract infection.</title>
        <authorList>
            <person name="Kuroda M."/>
            <person name="Yamashita A."/>
            <person name="Hirakawa H."/>
            <person name="Kumano M."/>
            <person name="Morikawa K."/>
            <person name="Higashide M."/>
            <person name="Maruyama A."/>
            <person name="Inose Y."/>
            <person name="Matoba K."/>
            <person name="Toh H."/>
            <person name="Kuhara S."/>
            <person name="Hattori M."/>
            <person name="Ohta T."/>
        </authorList>
    </citation>
    <scope>NUCLEOTIDE SEQUENCE [LARGE SCALE GENOMIC DNA]</scope>
    <source>
        <strain>ATCC 15305 / DSM 20229 / NCIMB 8711 / NCTC 7292 / S-41</strain>
    </source>
</reference>
<feature type="chain" id="PRO_0000272537" description="Phosphate import ATP-binding protein PstB">
    <location>
        <begin position="1"/>
        <end position="291"/>
    </location>
</feature>
<feature type="domain" description="ABC transporter" evidence="1">
    <location>
        <begin position="45"/>
        <end position="286"/>
    </location>
</feature>
<feature type="region of interest" description="Disordered" evidence="2">
    <location>
        <begin position="1"/>
        <end position="21"/>
    </location>
</feature>
<feature type="binding site" evidence="1">
    <location>
        <begin position="77"/>
        <end position="84"/>
    </location>
    <ligand>
        <name>ATP</name>
        <dbReference type="ChEBI" id="CHEBI:30616"/>
    </ligand>
</feature>
<sequence>MANKQIIDKNDDLQAHTDRNDKPIATIESNHKENKIPDSEKKIVYSTKNLDLWYGENHALKNINLDILENNVTAIIGPSGCGKSTYIKALNRMVELVPSVKTAGKILYRDKNIFDDKHSVEKLRTNVGMVFQQPNPFPKSIYDNITYGPKIHGIKNKKVLDEIVEKSLRGAAIWDELKDRLDTNAYSLSGGQQQRVCIARTLAIEPDVILMDEPTSALDPISTLKVEELVQELKEKYSIIIVTHNMQQAARVSDKTAFFLNGYVNEYDDTDKIFSNPSDKQTEDYISGRFG</sequence>
<comment type="function">
    <text evidence="1">Part of the ABC transporter complex PstSACB involved in phosphate import. Responsible for energy coupling to the transport system.</text>
</comment>
<comment type="catalytic activity">
    <reaction evidence="1">
        <text>phosphate(out) + ATP + H2O = ADP + 2 phosphate(in) + H(+)</text>
        <dbReference type="Rhea" id="RHEA:24440"/>
        <dbReference type="ChEBI" id="CHEBI:15377"/>
        <dbReference type="ChEBI" id="CHEBI:15378"/>
        <dbReference type="ChEBI" id="CHEBI:30616"/>
        <dbReference type="ChEBI" id="CHEBI:43474"/>
        <dbReference type="ChEBI" id="CHEBI:456216"/>
        <dbReference type="EC" id="7.3.2.1"/>
    </reaction>
</comment>
<comment type="subunit">
    <text evidence="1">The complex is composed of two ATP-binding proteins (PstB), two transmembrane proteins (PstC and PstA) and a solute-binding protein (PstS).</text>
</comment>
<comment type="subcellular location">
    <subcellularLocation>
        <location evidence="1">Cell membrane</location>
        <topology evidence="1">Peripheral membrane protein</topology>
    </subcellularLocation>
</comment>
<comment type="similarity">
    <text evidence="1">Belongs to the ABC transporter superfamily. Phosphate importer (TC 3.A.1.7) family.</text>
</comment>
<protein>
    <recommendedName>
        <fullName evidence="1">Phosphate import ATP-binding protein PstB</fullName>
        <ecNumber evidence="1">7.3.2.1</ecNumber>
    </recommendedName>
    <alternativeName>
        <fullName evidence="1">ABC phosphate transporter</fullName>
    </alternativeName>
    <alternativeName>
        <fullName evidence="1">Phosphate-transporting ATPase</fullName>
    </alternativeName>
</protein>